<feature type="chain" id="PRO_0000243214" description="Large ribosomal subunit protein uL22">
    <location>
        <begin position="1"/>
        <end position="114"/>
    </location>
</feature>
<keyword id="KW-0687">Ribonucleoprotein</keyword>
<keyword id="KW-0689">Ribosomal protein</keyword>
<keyword id="KW-0694">RNA-binding</keyword>
<keyword id="KW-0699">rRNA-binding</keyword>
<organism>
    <name type="scientific">Streptococcus thermophilus (strain CNRZ 1066)</name>
    <dbReference type="NCBI Taxonomy" id="299768"/>
    <lineage>
        <taxon>Bacteria</taxon>
        <taxon>Bacillati</taxon>
        <taxon>Bacillota</taxon>
        <taxon>Bacilli</taxon>
        <taxon>Lactobacillales</taxon>
        <taxon>Streptococcaceae</taxon>
        <taxon>Streptococcus</taxon>
    </lineage>
</organism>
<gene>
    <name evidence="1" type="primary">rplV</name>
    <name type="ordered locus">str1929</name>
</gene>
<reference key="1">
    <citation type="journal article" date="2004" name="Nat. Biotechnol.">
        <title>Complete sequence and comparative genome analysis of the dairy bacterium Streptococcus thermophilus.</title>
        <authorList>
            <person name="Bolotin A."/>
            <person name="Quinquis B."/>
            <person name="Renault P."/>
            <person name="Sorokin A."/>
            <person name="Ehrlich S.D."/>
            <person name="Kulakauskas S."/>
            <person name="Lapidus A."/>
            <person name="Goltsman E."/>
            <person name="Mazur M."/>
            <person name="Pusch G.D."/>
            <person name="Fonstein M."/>
            <person name="Overbeek R."/>
            <person name="Kyprides N."/>
            <person name="Purnelle B."/>
            <person name="Prozzi D."/>
            <person name="Ngui K."/>
            <person name="Masuy D."/>
            <person name="Hancy F."/>
            <person name="Burteau S."/>
            <person name="Boutry M."/>
            <person name="Delcour J."/>
            <person name="Goffeau A."/>
            <person name="Hols P."/>
        </authorList>
    </citation>
    <scope>NUCLEOTIDE SEQUENCE [LARGE SCALE GENOMIC DNA]</scope>
    <source>
        <strain>CNRZ 1066</strain>
    </source>
</reference>
<comment type="function">
    <text evidence="1">This protein binds specifically to 23S rRNA; its binding is stimulated by other ribosomal proteins, e.g. L4, L17, and L20. It is important during the early stages of 50S assembly. It makes multiple contacts with different domains of the 23S rRNA in the assembled 50S subunit and ribosome (By similarity).</text>
</comment>
<comment type="function">
    <text evidence="1">The globular domain of the protein is located near the polypeptide exit tunnel on the outside of the subunit, while an extended beta-hairpin is found that lines the wall of the exit tunnel in the center of the 70S ribosome.</text>
</comment>
<comment type="subunit">
    <text evidence="1">Part of the 50S ribosomal subunit.</text>
</comment>
<comment type="similarity">
    <text evidence="1">Belongs to the universal ribosomal protein uL22 family.</text>
</comment>
<accession>Q5LXR6</accession>
<evidence type="ECO:0000255" key="1">
    <source>
        <dbReference type="HAMAP-Rule" id="MF_01331"/>
    </source>
</evidence>
<evidence type="ECO:0000305" key="2"/>
<sequence length="114" mass="12416">MAEITSAKAMARTVRVSPRKTRLVLDLIRGKNVADAIAILKFTPNKAARIVEKTLNSAIANAENNFGLEKANLVVSETFANEGPTMKRFRPRAKGSASPINKRTTHVTVVVSEK</sequence>
<name>RL22_STRT1</name>
<proteinExistence type="inferred from homology"/>
<dbReference type="EMBL" id="CP000024">
    <property type="protein sequence ID" value="AAV63442.1"/>
    <property type="molecule type" value="Genomic_DNA"/>
</dbReference>
<dbReference type="RefSeq" id="WP_002887063.1">
    <property type="nucleotide sequence ID" value="NC_006449.1"/>
</dbReference>
<dbReference type="SMR" id="Q5LXR6"/>
<dbReference type="GeneID" id="93793081"/>
<dbReference type="KEGG" id="stc:str1929"/>
<dbReference type="HOGENOM" id="CLU_083987_3_3_9"/>
<dbReference type="GO" id="GO:0022625">
    <property type="term" value="C:cytosolic large ribosomal subunit"/>
    <property type="evidence" value="ECO:0007669"/>
    <property type="project" value="TreeGrafter"/>
</dbReference>
<dbReference type="GO" id="GO:0019843">
    <property type="term" value="F:rRNA binding"/>
    <property type="evidence" value="ECO:0007669"/>
    <property type="project" value="UniProtKB-UniRule"/>
</dbReference>
<dbReference type="GO" id="GO:0003735">
    <property type="term" value="F:structural constituent of ribosome"/>
    <property type="evidence" value="ECO:0007669"/>
    <property type="project" value="InterPro"/>
</dbReference>
<dbReference type="GO" id="GO:0006412">
    <property type="term" value="P:translation"/>
    <property type="evidence" value="ECO:0007669"/>
    <property type="project" value="UniProtKB-UniRule"/>
</dbReference>
<dbReference type="CDD" id="cd00336">
    <property type="entry name" value="Ribosomal_L22"/>
    <property type="match status" value="1"/>
</dbReference>
<dbReference type="FunFam" id="3.90.470.10:FF:000001">
    <property type="entry name" value="50S ribosomal protein L22"/>
    <property type="match status" value="1"/>
</dbReference>
<dbReference type="Gene3D" id="3.90.470.10">
    <property type="entry name" value="Ribosomal protein L22/L17"/>
    <property type="match status" value="1"/>
</dbReference>
<dbReference type="HAMAP" id="MF_01331_B">
    <property type="entry name" value="Ribosomal_uL22_B"/>
    <property type="match status" value="1"/>
</dbReference>
<dbReference type="InterPro" id="IPR001063">
    <property type="entry name" value="Ribosomal_uL22"/>
</dbReference>
<dbReference type="InterPro" id="IPR005727">
    <property type="entry name" value="Ribosomal_uL22_bac/chlpt-type"/>
</dbReference>
<dbReference type="InterPro" id="IPR047867">
    <property type="entry name" value="Ribosomal_uL22_bac/org-type"/>
</dbReference>
<dbReference type="InterPro" id="IPR018260">
    <property type="entry name" value="Ribosomal_uL22_CS"/>
</dbReference>
<dbReference type="InterPro" id="IPR036394">
    <property type="entry name" value="Ribosomal_uL22_sf"/>
</dbReference>
<dbReference type="NCBIfam" id="TIGR01044">
    <property type="entry name" value="rplV_bact"/>
    <property type="match status" value="1"/>
</dbReference>
<dbReference type="PANTHER" id="PTHR13501">
    <property type="entry name" value="CHLOROPLAST 50S RIBOSOMAL PROTEIN L22-RELATED"/>
    <property type="match status" value="1"/>
</dbReference>
<dbReference type="PANTHER" id="PTHR13501:SF8">
    <property type="entry name" value="LARGE RIBOSOMAL SUBUNIT PROTEIN UL22M"/>
    <property type="match status" value="1"/>
</dbReference>
<dbReference type="Pfam" id="PF00237">
    <property type="entry name" value="Ribosomal_L22"/>
    <property type="match status" value="1"/>
</dbReference>
<dbReference type="SUPFAM" id="SSF54843">
    <property type="entry name" value="Ribosomal protein L22"/>
    <property type="match status" value="1"/>
</dbReference>
<dbReference type="PROSITE" id="PS00464">
    <property type="entry name" value="RIBOSOMAL_L22"/>
    <property type="match status" value="1"/>
</dbReference>
<protein>
    <recommendedName>
        <fullName evidence="1">Large ribosomal subunit protein uL22</fullName>
    </recommendedName>
    <alternativeName>
        <fullName evidence="2">50S ribosomal protein L22</fullName>
    </alternativeName>
</protein>